<accession>B9DPP7</accession>
<comment type="function">
    <text evidence="1">Catalyzes the attachment of isoleucine to tRNA(Ile). As IleRS can inadvertently accommodate and process structurally similar amino acids such as valine, to avoid such errors it has two additional distinct tRNA(Ile)-dependent editing activities. One activity is designated as 'pretransfer' editing and involves the hydrolysis of activated Val-AMP. The other activity is designated 'posttransfer' editing and involves deacylation of mischarged Val-tRNA(Ile).</text>
</comment>
<comment type="catalytic activity">
    <reaction evidence="1">
        <text>tRNA(Ile) + L-isoleucine + ATP = L-isoleucyl-tRNA(Ile) + AMP + diphosphate</text>
        <dbReference type="Rhea" id="RHEA:11060"/>
        <dbReference type="Rhea" id="RHEA-COMP:9666"/>
        <dbReference type="Rhea" id="RHEA-COMP:9695"/>
        <dbReference type="ChEBI" id="CHEBI:30616"/>
        <dbReference type="ChEBI" id="CHEBI:33019"/>
        <dbReference type="ChEBI" id="CHEBI:58045"/>
        <dbReference type="ChEBI" id="CHEBI:78442"/>
        <dbReference type="ChEBI" id="CHEBI:78528"/>
        <dbReference type="ChEBI" id="CHEBI:456215"/>
        <dbReference type="EC" id="6.1.1.5"/>
    </reaction>
</comment>
<comment type="cofactor">
    <cofactor evidence="1">
        <name>Zn(2+)</name>
        <dbReference type="ChEBI" id="CHEBI:29105"/>
    </cofactor>
    <text evidence="1">Binds 1 zinc ion per subunit.</text>
</comment>
<comment type="subunit">
    <text evidence="1">Monomer.</text>
</comment>
<comment type="subcellular location">
    <subcellularLocation>
        <location evidence="1">Cytoplasm</location>
    </subcellularLocation>
</comment>
<comment type="domain">
    <text evidence="1">IleRS has two distinct active sites: one for aminoacylation and one for editing. The misactivated valine is translocated from the active site to the editing site, which sterically excludes the correctly activated isoleucine. The single editing site contains two valyl binding pockets, one specific for each substrate (Val-AMP or Val-tRNA(Ile)).</text>
</comment>
<comment type="similarity">
    <text evidence="1">Belongs to the class-I aminoacyl-tRNA synthetase family. IleS type 1 subfamily.</text>
</comment>
<protein>
    <recommendedName>
        <fullName evidence="1">Isoleucine--tRNA ligase</fullName>
        <ecNumber evidence="1">6.1.1.5</ecNumber>
    </recommendedName>
    <alternativeName>
        <fullName evidence="1">Isoleucyl-tRNA synthetase</fullName>
        <shortName evidence="1">IleRS</shortName>
    </alternativeName>
</protein>
<organism>
    <name type="scientific">Staphylococcus carnosus (strain TM300)</name>
    <dbReference type="NCBI Taxonomy" id="396513"/>
    <lineage>
        <taxon>Bacteria</taxon>
        <taxon>Bacillati</taxon>
        <taxon>Bacillota</taxon>
        <taxon>Bacilli</taxon>
        <taxon>Bacillales</taxon>
        <taxon>Staphylococcaceae</taxon>
        <taxon>Staphylococcus</taxon>
    </lineage>
</organism>
<sequence>MNYKDTLLMPKTDFPMRGGLPKKEPEIQKQWDEQDLYHKILEKNKGHESYILHDGPPYANGNLHMGHALNKILKDFIVRYKSMQGYYSPYVPGWDTHGLPIEQALTKKGVKRKEMPISEFRKLCEEFALEQIDIQKKDFKRLGVNGDFNDPYITLKPEYEAAQIRLFGEMADRGLIYKGKKPVYWSPSSESSLAEAEIEYHDKRSPSIYVAFDVKDGKGVVDEDAKFIIWTTTPWTLPSNVAITVHPDLKYGQYNVNGEKYVVGQDLVEEVAEELGWDKEDIQLEKEFTGKELEYVETQHPFIDRVSLVINGLHVTTDAGTGAVHTAPGHGEDDYIVGQKYNLPVISPLNDKGVFTEEGGQFEGMFYDKANKAVTDLLKENGSLLKLKFITHSYPHDWRTKKPVIFRATPQWFASISKVRQDILDAIEDTNFKVDWGKTRIYNMIRDRGEWVISRQRVWGVPLPVFYTENGDIIMDKEVIYHVANLFEKYGSNVWFDRDAKDLLPEGFTHPGSPNGEFTKEEDIMDVWFDSGSSHRGVLETRPELSFPADLYLEGSDQYRGWFNSSITTAVATRGQSPYKFLLSHGFVMDGEGKKMSKSLGNVIVPDQIVKQKGADIARLWVSSVDYLSDVRISDEILKQTADVYRKIRNTLRFMLGNVNDFNPETDAVPESDLLEVDRYLLNRLREFTESIINHYDNFDYLNIYQEVQNFINVELSNFYLDYGKDILYIEKQDSHKRRSMQTVLYQILVDMTKLLAPILAHTSEEVWSYIPHVKEESVHLADMPEVVKPDEELLEKWNTFMKLRDDVNRALEEARNNKVIGKSLEAKVIIGSNESFDAADFLKDFENLHQLFIVSQVEVEEKVEDGNEYYYGDIKVVHADGEKCERCWNYSTELGSVNGLDHLCPRCQGVVADL</sequence>
<proteinExistence type="inferred from homology"/>
<evidence type="ECO:0000255" key="1">
    <source>
        <dbReference type="HAMAP-Rule" id="MF_02002"/>
    </source>
</evidence>
<name>SYI_STACT</name>
<gene>
    <name evidence="1" type="primary">ileS</name>
    <name type="ordered locus">Sca_0806</name>
</gene>
<reference key="1">
    <citation type="journal article" date="2009" name="Appl. Environ. Microbiol.">
        <title>Genome analysis of the meat starter culture bacterium Staphylococcus carnosus TM300.</title>
        <authorList>
            <person name="Rosenstein R."/>
            <person name="Nerz C."/>
            <person name="Biswas L."/>
            <person name="Resch A."/>
            <person name="Raddatz G."/>
            <person name="Schuster S.C."/>
            <person name="Goetz F."/>
        </authorList>
    </citation>
    <scope>NUCLEOTIDE SEQUENCE [LARGE SCALE GENOMIC DNA]</scope>
    <source>
        <strain>TM300</strain>
    </source>
</reference>
<keyword id="KW-0030">Aminoacyl-tRNA synthetase</keyword>
<keyword id="KW-0067">ATP-binding</keyword>
<keyword id="KW-0963">Cytoplasm</keyword>
<keyword id="KW-0436">Ligase</keyword>
<keyword id="KW-0479">Metal-binding</keyword>
<keyword id="KW-0547">Nucleotide-binding</keyword>
<keyword id="KW-0648">Protein biosynthesis</keyword>
<keyword id="KW-1185">Reference proteome</keyword>
<keyword id="KW-0862">Zinc</keyword>
<dbReference type="EC" id="6.1.1.5" evidence="1"/>
<dbReference type="EMBL" id="AM295250">
    <property type="protein sequence ID" value="CAL27716.1"/>
    <property type="molecule type" value="Genomic_DNA"/>
</dbReference>
<dbReference type="RefSeq" id="WP_015900058.1">
    <property type="nucleotide sequence ID" value="NC_012121.1"/>
</dbReference>
<dbReference type="SMR" id="B9DPP7"/>
<dbReference type="GeneID" id="93795742"/>
<dbReference type="KEGG" id="sca:SCA_0806"/>
<dbReference type="eggNOG" id="COG0060">
    <property type="taxonomic scope" value="Bacteria"/>
</dbReference>
<dbReference type="HOGENOM" id="CLU_001493_7_2_9"/>
<dbReference type="OrthoDB" id="9810365at2"/>
<dbReference type="BioCyc" id="SCAR396513:SCA_RS04085-MONOMER"/>
<dbReference type="Proteomes" id="UP000000444">
    <property type="component" value="Chromosome"/>
</dbReference>
<dbReference type="GO" id="GO:0005829">
    <property type="term" value="C:cytosol"/>
    <property type="evidence" value="ECO:0007669"/>
    <property type="project" value="TreeGrafter"/>
</dbReference>
<dbReference type="GO" id="GO:0002161">
    <property type="term" value="F:aminoacyl-tRNA deacylase activity"/>
    <property type="evidence" value="ECO:0007669"/>
    <property type="project" value="InterPro"/>
</dbReference>
<dbReference type="GO" id="GO:0005524">
    <property type="term" value="F:ATP binding"/>
    <property type="evidence" value="ECO:0007669"/>
    <property type="project" value="UniProtKB-UniRule"/>
</dbReference>
<dbReference type="GO" id="GO:0004822">
    <property type="term" value="F:isoleucine-tRNA ligase activity"/>
    <property type="evidence" value="ECO:0007669"/>
    <property type="project" value="UniProtKB-UniRule"/>
</dbReference>
<dbReference type="GO" id="GO:0000049">
    <property type="term" value="F:tRNA binding"/>
    <property type="evidence" value="ECO:0007669"/>
    <property type="project" value="InterPro"/>
</dbReference>
<dbReference type="GO" id="GO:0008270">
    <property type="term" value="F:zinc ion binding"/>
    <property type="evidence" value="ECO:0007669"/>
    <property type="project" value="UniProtKB-UniRule"/>
</dbReference>
<dbReference type="GO" id="GO:0006428">
    <property type="term" value="P:isoleucyl-tRNA aminoacylation"/>
    <property type="evidence" value="ECO:0007669"/>
    <property type="project" value="UniProtKB-UniRule"/>
</dbReference>
<dbReference type="CDD" id="cd07960">
    <property type="entry name" value="Anticodon_Ia_Ile_BEm"/>
    <property type="match status" value="1"/>
</dbReference>
<dbReference type="CDD" id="cd00818">
    <property type="entry name" value="IleRS_core"/>
    <property type="match status" value="1"/>
</dbReference>
<dbReference type="FunFam" id="1.10.10.830:FF:000001">
    <property type="entry name" value="Isoleucine--tRNA ligase"/>
    <property type="match status" value="1"/>
</dbReference>
<dbReference type="FunFam" id="1.10.730.20:FF:000001">
    <property type="entry name" value="Isoleucine--tRNA ligase"/>
    <property type="match status" value="1"/>
</dbReference>
<dbReference type="FunFam" id="3.40.50.620:FF:000152">
    <property type="entry name" value="Isoleucine--tRNA ligase"/>
    <property type="match status" value="1"/>
</dbReference>
<dbReference type="FunFam" id="3.90.740.10:FF:000006">
    <property type="entry name" value="Isoleucine--tRNA ligase"/>
    <property type="match status" value="1"/>
</dbReference>
<dbReference type="Gene3D" id="1.10.730.20">
    <property type="match status" value="1"/>
</dbReference>
<dbReference type="Gene3D" id="3.40.50.620">
    <property type="entry name" value="HUPs"/>
    <property type="match status" value="2"/>
</dbReference>
<dbReference type="Gene3D" id="1.10.10.830">
    <property type="entry name" value="Ile-tRNA synthetase CP2 domain-like"/>
    <property type="match status" value="1"/>
</dbReference>
<dbReference type="HAMAP" id="MF_02002">
    <property type="entry name" value="Ile_tRNA_synth_type1"/>
    <property type="match status" value="1"/>
</dbReference>
<dbReference type="InterPro" id="IPR001412">
    <property type="entry name" value="aa-tRNA-synth_I_CS"/>
</dbReference>
<dbReference type="InterPro" id="IPR002300">
    <property type="entry name" value="aa-tRNA-synth_Ia"/>
</dbReference>
<dbReference type="InterPro" id="IPR033708">
    <property type="entry name" value="Anticodon_Ile_BEm"/>
</dbReference>
<dbReference type="InterPro" id="IPR002301">
    <property type="entry name" value="Ile-tRNA-ligase"/>
</dbReference>
<dbReference type="InterPro" id="IPR023585">
    <property type="entry name" value="Ile-tRNA-ligase_type1"/>
</dbReference>
<dbReference type="InterPro" id="IPR050081">
    <property type="entry name" value="Ile-tRNA_ligase"/>
</dbReference>
<dbReference type="InterPro" id="IPR013155">
    <property type="entry name" value="M/V/L/I-tRNA-synth_anticd-bd"/>
</dbReference>
<dbReference type="InterPro" id="IPR014729">
    <property type="entry name" value="Rossmann-like_a/b/a_fold"/>
</dbReference>
<dbReference type="InterPro" id="IPR009080">
    <property type="entry name" value="tRNAsynth_Ia_anticodon-bd"/>
</dbReference>
<dbReference type="InterPro" id="IPR009008">
    <property type="entry name" value="Val/Leu/Ile-tRNA-synth_edit"/>
</dbReference>
<dbReference type="InterPro" id="IPR010663">
    <property type="entry name" value="Znf_FPG/IleRS"/>
</dbReference>
<dbReference type="NCBIfam" id="TIGR00392">
    <property type="entry name" value="ileS"/>
    <property type="match status" value="1"/>
</dbReference>
<dbReference type="PANTHER" id="PTHR42765:SF1">
    <property type="entry name" value="ISOLEUCINE--TRNA LIGASE, MITOCHONDRIAL"/>
    <property type="match status" value="1"/>
</dbReference>
<dbReference type="PANTHER" id="PTHR42765">
    <property type="entry name" value="SOLEUCYL-TRNA SYNTHETASE"/>
    <property type="match status" value="1"/>
</dbReference>
<dbReference type="Pfam" id="PF08264">
    <property type="entry name" value="Anticodon_1"/>
    <property type="match status" value="1"/>
</dbReference>
<dbReference type="Pfam" id="PF00133">
    <property type="entry name" value="tRNA-synt_1"/>
    <property type="match status" value="1"/>
</dbReference>
<dbReference type="Pfam" id="PF06827">
    <property type="entry name" value="zf-FPG_IleRS"/>
    <property type="match status" value="1"/>
</dbReference>
<dbReference type="PRINTS" id="PR00984">
    <property type="entry name" value="TRNASYNTHILE"/>
</dbReference>
<dbReference type="SUPFAM" id="SSF47323">
    <property type="entry name" value="Anticodon-binding domain of a subclass of class I aminoacyl-tRNA synthetases"/>
    <property type="match status" value="1"/>
</dbReference>
<dbReference type="SUPFAM" id="SSF52374">
    <property type="entry name" value="Nucleotidylyl transferase"/>
    <property type="match status" value="1"/>
</dbReference>
<dbReference type="SUPFAM" id="SSF50677">
    <property type="entry name" value="ValRS/IleRS/LeuRS editing domain"/>
    <property type="match status" value="1"/>
</dbReference>
<dbReference type="PROSITE" id="PS00178">
    <property type="entry name" value="AA_TRNA_LIGASE_I"/>
    <property type="match status" value="1"/>
</dbReference>
<feature type="chain" id="PRO_1000189198" description="Isoleucine--tRNA ligase">
    <location>
        <begin position="1"/>
        <end position="915"/>
    </location>
</feature>
<feature type="short sequence motif" description="'HIGH' region">
    <location>
        <begin position="57"/>
        <end position="67"/>
    </location>
</feature>
<feature type="short sequence motif" description="'KMSKS' region">
    <location>
        <begin position="595"/>
        <end position="599"/>
    </location>
</feature>
<feature type="binding site" evidence="1">
    <location>
        <position position="554"/>
    </location>
    <ligand>
        <name>L-isoleucyl-5'-AMP</name>
        <dbReference type="ChEBI" id="CHEBI:178002"/>
    </ligand>
</feature>
<feature type="binding site" evidence="1">
    <location>
        <position position="598"/>
    </location>
    <ligand>
        <name>ATP</name>
        <dbReference type="ChEBI" id="CHEBI:30616"/>
    </ligand>
</feature>
<feature type="binding site" evidence="1">
    <location>
        <position position="885"/>
    </location>
    <ligand>
        <name>Zn(2+)</name>
        <dbReference type="ChEBI" id="CHEBI:29105"/>
    </ligand>
</feature>
<feature type="binding site" evidence="1">
    <location>
        <position position="888"/>
    </location>
    <ligand>
        <name>Zn(2+)</name>
        <dbReference type="ChEBI" id="CHEBI:29105"/>
    </ligand>
</feature>
<feature type="binding site" evidence="1">
    <location>
        <position position="905"/>
    </location>
    <ligand>
        <name>Zn(2+)</name>
        <dbReference type="ChEBI" id="CHEBI:29105"/>
    </ligand>
</feature>
<feature type="binding site" evidence="1">
    <location>
        <position position="908"/>
    </location>
    <ligand>
        <name>Zn(2+)</name>
        <dbReference type="ChEBI" id="CHEBI:29105"/>
    </ligand>
</feature>